<evidence type="ECO:0000250" key="1"/>
<evidence type="ECO:0000255" key="2">
    <source>
        <dbReference type="PROSITE-ProRule" id="PRU00029"/>
    </source>
</evidence>
<evidence type="ECO:0000255" key="3">
    <source>
        <dbReference type="PROSITE-ProRule" id="PRU00175"/>
    </source>
</evidence>
<evidence type="ECO:0000305" key="4"/>
<organism>
    <name type="scientific">Pan troglodytes</name>
    <name type="common">Chimpanzee</name>
    <dbReference type="NCBI Taxonomy" id="9598"/>
    <lineage>
        <taxon>Eukaryota</taxon>
        <taxon>Metazoa</taxon>
        <taxon>Chordata</taxon>
        <taxon>Craniata</taxon>
        <taxon>Vertebrata</taxon>
        <taxon>Euteleostomi</taxon>
        <taxon>Mammalia</taxon>
        <taxon>Eutheria</taxon>
        <taxon>Euarchontoglires</taxon>
        <taxon>Primates</taxon>
        <taxon>Haplorrhini</taxon>
        <taxon>Catarrhini</taxon>
        <taxon>Hominidae</taxon>
        <taxon>Pan</taxon>
    </lineage>
</organism>
<reference key="1">
    <citation type="journal article" date="2001" name="Mol. Cell. Biol.">
        <title>Molecular cloning of ILP-2, a novel member of the inhibitor of apoptosis protein family.</title>
        <authorList>
            <person name="Richter B.W.M."/>
            <person name="Mir S.S."/>
            <person name="Eiben L.J."/>
            <person name="Lewis J."/>
            <person name="Reffey S.B."/>
            <person name="Frattini A."/>
            <person name="Tian L."/>
            <person name="Frank S."/>
            <person name="Youle R.J."/>
            <person name="Nelson D.L."/>
            <person name="Notarangelo L.D."/>
            <person name="Vezzoni P."/>
            <person name="Fearnhead H.O."/>
            <person name="Duckett C.S."/>
        </authorList>
    </citation>
    <scope>NUCLEOTIDE SEQUENCE [MRNA]</scope>
</reference>
<protein>
    <recommendedName>
        <fullName>Baculoviral IAP repeat-containing protein 8</fullName>
    </recommendedName>
    <alternativeName>
        <fullName>Inhibitor of apoptosis-like protein 2</fullName>
        <shortName>IAP-like protein 2</shortName>
        <shortName>ILP-2</shortName>
    </alternativeName>
</protein>
<accession>Q95M72</accession>
<gene>
    <name type="primary">BIRC8</name>
    <name type="synonym">ILP2</name>
</gene>
<name>BIRC8_PANTR</name>
<comment type="function">
    <text evidence="1">Protects against apoptosis mediated by BAX.</text>
</comment>
<comment type="subunit">
    <text evidence="1">Binds to caspase-9.</text>
</comment>
<comment type="subcellular location">
    <subcellularLocation>
        <location evidence="4">Cytoplasm</location>
    </subcellularLocation>
</comment>
<comment type="similarity">
    <text evidence="4">Belongs to the IAP family.</text>
</comment>
<feature type="chain" id="PRO_0000122365" description="Baculoviral IAP repeat-containing protein 8">
    <location>
        <begin position="1"/>
        <end position="236"/>
    </location>
</feature>
<feature type="repeat" description="BIR">
    <location>
        <begin position="7"/>
        <end position="70"/>
    </location>
</feature>
<feature type="zinc finger region" description="RING-type" evidence="3">
    <location>
        <begin position="189"/>
        <end position="224"/>
    </location>
</feature>
<feature type="binding site" evidence="2">
    <location>
        <position position="39"/>
    </location>
    <ligand>
        <name>Zn(2+)</name>
        <dbReference type="ChEBI" id="CHEBI:29105"/>
    </ligand>
</feature>
<feature type="binding site" evidence="2">
    <location>
        <position position="42"/>
    </location>
    <ligand>
        <name>Zn(2+)</name>
        <dbReference type="ChEBI" id="CHEBI:29105"/>
    </ligand>
</feature>
<feature type="binding site" evidence="2">
    <location>
        <position position="59"/>
    </location>
    <ligand>
        <name>Zn(2+)</name>
        <dbReference type="ChEBI" id="CHEBI:29105"/>
    </ligand>
</feature>
<feature type="binding site" evidence="2">
    <location>
        <position position="66"/>
    </location>
    <ligand>
        <name>Zn(2+)</name>
        <dbReference type="ChEBI" id="CHEBI:29105"/>
    </ligand>
</feature>
<sequence>MTGYEARLITFGTWMYFVNKEQLARAGFYAIGQEDKVQCFHCGGGLANWKPKEDPWEQHAKWYPGCKYLLEEKGHEYINNIHLTRSLEGALVQTTKKTPSLTKRINDTIFPNPMLQEAIRMGFDFKDVKKIMEERIQTSGSNYKTLEVLVADLVSAQKDTTENESNQTSLQREISPEEPLRRLQDEKLCKICMDRHIAVVFIPCGHLVTCKQCAEAVDRCPMCSAVIDFKQRVFMS</sequence>
<dbReference type="EMBL" id="AY030052">
    <property type="protein sequence ID" value="AAK49776.1"/>
    <property type="molecule type" value="mRNA"/>
</dbReference>
<dbReference type="RefSeq" id="NP_001009036.1">
    <property type="nucleotide sequence ID" value="NM_001009036.1"/>
</dbReference>
<dbReference type="SMR" id="Q95M72"/>
<dbReference type="FunCoup" id="Q95M72">
    <property type="interactions" value="7"/>
</dbReference>
<dbReference type="STRING" id="9598.ENSPTRP00000072584"/>
<dbReference type="MEROPS" id="I32.008"/>
<dbReference type="GeneID" id="450113"/>
<dbReference type="KEGG" id="ptr:450113"/>
<dbReference type="CTD" id="112401"/>
<dbReference type="InParanoid" id="Q95M72"/>
<dbReference type="Proteomes" id="UP000002277">
    <property type="component" value="Unplaced"/>
</dbReference>
<dbReference type="GO" id="GO:0005737">
    <property type="term" value="C:cytoplasm"/>
    <property type="evidence" value="ECO:0000318"/>
    <property type="project" value="GO_Central"/>
</dbReference>
<dbReference type="GO" id="GO:0005634">
    <property type="term" value="C:nucleus"/>
    <property type="evidence" value="ECO:0000318"/>
    <property type="project" value="GO_Central"/>
</dbReference>
<dbReference type="GO" id="GO:0043027">
    <property type="term" value="F:cysteine-type endopeptidase inhibitor activity involved in apoptotic process"/>
    <property type="evidence" value="ECO:0000318"/>
    <property type="project" value="GO_Central"/>
</dbReference>
<dbReference type="GO" id="GO:0061630">
    <property type="term" value="F:ubiquitin protein ligase activity"/>
    <property type="evidence" value="ECO:0000318"/>
    <property type="project" value="GO_Central"/>
</dbReference>
<dbReference type="GO" id="GO:0008270">
    <property type="term" value="F:zinc ion binding"/>
    <property type="evidence" value="ECO:0007669"/>
    <property type="project" value="UniProtKB-KW"/>
</dbReference>
<dbReference type="GO" id="GO:0006915">
    <property type="term" value="P:apoptotic process"/>
    <property type="evidence" value="ECO:0007669"/>
    <property type="project" value="UniProtKB-KW"/>
</dbReference>
<dbReference type="GO" id="GO:0043066">
    <property type="term" value="P:negative regulation of apoptotic process"/>
    <property type="evidence" value="ECO:0000318"/>
    <property type="project" value="GO_Central"/>
</dbReference>
<dbReference type="GO" id="GO:0090263">
    <property type="term" value="P:positive regulation of canonical Wnt signaling pathway"/>
    <property type="evidence" value="ECO:0000318"/>
    <property type="project" value="GO_Central"/>
</dbReference>
<dbReference type="GO" id="GO:0031398">
    <property type="term" value="P:positive regulation of protein ubiquitination"/>
    <property type="evidence" value="ECO:0000318"/>
    <property type="project" value="GO_Central"/>
</dbReference>
<dbReference type="GO" id="GO:0051726">
    <property type="term" value="P:regulation of cell cycle"/>
    <property type="evidence" value="ECO:0000318"/>
    <property type="project" value="GO_Central"/>
</dbReference>
<dbReference type="CDD" id="cd00022">
    <property type="entry name" value="BIR"/>
    <property type="match status" value="1"/>
</dbReference>
<dbReference type="CDD" id="cd16714">
    <property type="entry name" value="RING-HC_BIRC4_8"/>
    <property type="match status" value="1"/>
</dbReference>
<dbReference type="CDD" id="cd14395">
    <property type="entry name" value="UBA_BIRC4_8"/>
    <property type="match status" value="1"/>
</dbReference>
<dbReference type="FunFam" id="3.30.40.10:FF:000184">
    <property type="entry name" value="Baculoviral IAP repeat containing 2"/>
    <property type="match status" value="1"/>
</dbReference>
<dbReference type="FunFam" id="1.10.1170.10:FF:000002">
    <property type="entry name" value="Baculoviral IAP repeat containing 7"/>
    <property type="match status" value="1"/>
</dbReference>
<dbReference type="FunFam" id="1.10.1170.10:FF:000003">
    <property type="entry name" value="E3 ubiquitin-protein ligase XIAP"/>
    <property type="match status" value="1"/>
</dbReference>
<dbReference type="FunFam" id="1.10.533.10:FF:000050">
    <property type="entry name" value="E3 ubiquitin-protein ligase XIAP"/>
    <property type="match status" value="1"/>
</dbReference>
<dbReference type="FunFam" id="1.10.8.10:FF:000065">
    <property type="entry name" value="E3 ubiquitin-protein ligase XIAP isoform X1"/>
    <property type="match status" value="1"/>
</dbReference>
<dbReference type="Gene3D" id="1.10.8.10">
    <property type="entry name" value="DNA helicase RuvA subunit, C-terminal domain"/>
    <property type="match status" value="1"/>
</dbReference>
<dbReference type="Gene3D" id="1.10.1170.10">
    <property type="entry name" value="Inhibitor Of Apoptosis Protein (2mihbC-IAP-1), Chain A"/>
    <property type="match status" value="1"/>
</dbReference>
<dbReference type="Gene3D" id="3.30.40.10">
    <property type="entry name" value="Zinc/RING finger domain, C3HC4 (zinc finger)"/>
    <property type="match status" value="1"/>
</dbReference>
<dbReference type="InterPro" id="IPR001370">
    <property type="entry name" value="BIR_rpt"/>
</dbReference>
<dbReference type="InterPro" id="IPR048875">
    <property type="entry name" value="BIRC2-3-like_UBA"/>
</dbReference>
<dbReference type="InterPro" id="IPR050784">
    <property type="entry name" value="IAP"/>
</dbReference>
<dbReference type="InterPro" id="IPR042579">
    <property type="entry name" value="XIAP/BIRC8_UBA"/>
</dbReference>
<dbReference type="InterPro" id="IPR001841">
    <property type="entry name" value="Znf_RING"/>
</dbReference>
<dbReference type="InterPro" id="IPR013083">
    <property type="entry name" value="Znf_RING/FYVE/PHD"/>
</dbReference>
<dbReference type="PANTHER" id="PTHR10044:SF167">
    <property type="entry name" value="BACULOVIRAL IAP REPEAT-CONTAINING PROTEIN 8"/>
    <property type="match status" value="1"/>
</dbReference>
<dbReference type="PANTHER" id="PTHR10044">
    <property type="entry name" value="INHIBITOR OF APOPTOSIS"/>
    <property type="match status" value="1"/>
</dbReference>
<dbReference type="Pfam" id="PF00653">
    <property type="entry name" value="BIR"/>
    <property type="match status" value="1"/>
</dbReference>
<dbReference type="Pfam" id="PF21290">
    <property type="entry name" value="UBA_BIRC2-3"/>
    <property type="match status" value="1"/>
</dbReference>
<dbReference type="Pfam" id="PF13920">
    <property type="entry name" value="zf-C3HC4_3"/>
    <property type="match status" value="1"/>
</dbReference>
<dbReference type="SMART" id="SM00238">
    <property type="entry name" value="BIR"/>
    <property type="match status" value="1"/>
</dbReference>
<dbReference type="SMART" id="SM00184">
    <property type="entry name" value="RING"/>
    <property type="match status" value="1"/>
</dbReference>
<dbReference type="SUPFAM" id="SSF57924">
    <property type="entry name" value="Inhibitor of apoptosis (IAP) repeat"/>
    <property type="match status" value="1"/>
</dbReference>
<dbReference type="PROSITE" id="PS01282">
    <property type="entry name" value="BIR_REPEAT_1"/>
    <property type="match status" value="1"/>
</dbReference>
<dbReference type="PROSITE" id="PS50143">
    <property type="entry name" value="BIR_REPEAT_2"/>
    <property type="match status" value="1"/>
</dbReference>
<dbReference type="PROSITE" id="PS50089">
    <property type="entry name" value="ZF_RING_2"/>
    <property type="match status" value="1"/>
</dbReference>
<keyword id="KW-0053">Apoptosis</keyword>
<keyword id="KW-0963">Cytoplasm</keyword>
<keyword id="KW-0479">Metal-binding</keyword>
<keyword id="KW-1185">Reference proteome</keyword>
<keyword id="KW-0862">Zinc</keyword>
<keyword id="KW-0863">Zinc-finger</keyword>
<proteinExistence type="evidence at transcript level"/>